<evidence type="ECO:0000255" key="1">
    <source>
        <dbReference type="PROSITE-ProRule" id="PRU00285"/>
    </source>
</evidence>
<evidence type="ECO:0000255" key="2">
    <source>
        <dbReference type="PROSITE-ProRule" id="PRU00355"/>
    </source>
</evidence>
<evidence type="ECO:0000256" key="3">
    <source>
        <dbReference type="SAM" id="MobiDB-lite"/>
    </source>
</evidence>
<evidence type="ECO:0000305" key="4"/>
<protein>
    <recommendedName>
        <fullName>AT-rich interactive domain-containing protein 6</fullName>
        <shortName>ARID domain-containing protein 6</shortName>
    </recommendedName>
</protein>
<dbReference type="EMBL" id="AC007369">
    <property type="protein sequence ID" value="AAD30601.1"/>
    <property type="status" value="ALT_SEQ"/>
    <property type="molecule type" value="Genomic_DNA"/>
</dbReference>
<dbReference type="EMBL" id="CP002684">
    <property type="protein sequence ID" value="AEE30039.1"/>
    <property type="molecule type" value="Genomic_DNA"/>
</dbReference>
<dbReference type="EMBL" id="AB493470">
    <property type="protein sequence ID" value="BAH30308.1"/>
    <property type="molecule type" value="mRNA"/>
</dbReference>
<dbReference type="PIR" id="G86341">
    <property type="entry name" value="G86341"/>
</dbReference>
<dbReference type="RefSeq" id="NP_173515.2">
    <property type="nucleotide sequence ID" value="NM_101944.3"/>
</dbReference>
<dbReference type="SMR" id="C0SUW7"/>
<dbReference type="BioGRID" id="23923">
    <property type="interactions" value="22"/>
</dbReference>
<dbReference type="FunCoup" id="C0SUW7">
    <property type="interactions" value="1028"/>
</dbReference>
<dbReference type="IntAct" id="C0SUW7">
    <property type="interactions" value="23"/>
</dbReference>
<dbReference type="STRING" id="3702.C0SUW7"/>
<dbReference type="iPTMnet" id="C0SUW7"/>
<dbReference type="PaxDb" id="3702-AT1G20910.1"/>
<dbReference type="ProteomicsDB" id="245176"/>
<dbReference type="EnsemblPlants" id="AT1G20910.1">
    <property type="protein sequence ID" value="AT1G20910.1"/>
    <property type="gene ID" value="AT1G20910"/>
</dbReference>
<dbReference type="GeneID" id="838684"/>
<dbReference type="Gramene" id="AT1G20910.1">
    <property type="protein sequence ID" value="AT1G20910.1"/>
    <property type="gene ID" value="AT1G20910"/>
</dbReference>
<dbReference type="KEGG" id="ath:AT1G20910"/>
<dbReference type="Araport" id="AT1G20910"/>
<dbReference type="TAIR" id="AT1G20910">
    <property type="gene designation" value="ARID3"/>
</dbReference>
<dbReference type="eggNOG" id="KOG2744">
    <property type="taxonomic scope" value="Eukaryota"/>
</dbReference>
<dbReference type="HOGENOM" id="CLU_029075_1_0_1"/>
<dbReference type="InParanoid" id="C0SUW7"/>
<dbReference type="OMA" id="NHQNPSE"/>
<dbReference type="PhylomeDB" id="C0SUW7"/>
<dbReference type="PRO" id="PR:C0SUW7"/>
<dbReference type="Proteomes" id="UP000006548">
    <property type="component" value="Chromosome 1"/>
</dbReference>
<dbReference type="ExpressionAtlas" id="C0SUW7">
    <property type="expression patterns" value="baseline and differential"/>
</dbReference>
<dbReference type="GO" id="GO:0000118">
    <property type="term" value="C:histone deacetylase complex"/>
    <property type="evidence" value="ECO:0000314"/>
    <property type="project" value="TAIR"/>
</dbReference>
<dbReference type="GO" id="GO:0003680">
    <property type="term" value="F:minor groove of adenine-thymine-rich DNA binding"/>
    <property type="evidence" value="ECO:0000353"/>
    <property type="project" value="TAIR"/>
</dbReference>
<dbReference type="GO" id="GO:0000976">
    <property type="term" value="F:transcription cis-regulatory region binding"/>
    <property type="evidence" value="ECO:0000353"/>
    <property type="project" value="TAIR"/>
</dbReference>
<dbReference type="GO" id="GO:0019760">
    <property type="term" value="P:glucosinolate metabolic process"/>
    <property type="evidence" value="ECO:0000315"/>
    <property type="project" value="TAIR"/>
</dbReference>
<dbReference type="GO" id="GO:0006357">
    <property type="term" value="P:regulation of transcription by RNA polymerase II"/>
    <property type="evidence" value="ECO:0007669"/>
    <property type="project" value="InterPro"/>
</dbReference>
<dbReference type="CDD" id="cd16100">
    <property type="entry name" value="ARID"/>
    <property type="match status" value="1"/>
</dbReference>
<dbReference type="FunFam" id="1.10.150.60:FF:000018">
    <property type="entry name" value="AT-rich interactive domain-containing protein 3"/>
    <property type="match status" value="1"/>
</dbReference>
<dbReference type="Gene3D" id="2.60.40.790">
    <property type="match status" value="1"/>
</dbReference>
<dbReference type="Gene3D" id="1.10.150.60">
    <property type="entry name" value="ARID DNA-binding domain"/>
    <property type="match status" value="1"/>
</dbReference>
<dbReference type="InterPro" id="IPR002068">
    <property type="entry name" value="A-crystallin/Hsp20_dom"/>
</dbReference>
<dbReference type="InterPro" id="IPR045147">
    <property type="entry name" value="ARI3A/B/C"/>
</dbReference>
<dbReference type="InterPro" id="IPR001606">
    <property type="entry name" value="ARID_dom"/>
</dbReference>
<dbReference type="InterPro" id="IPR036431">
    <property type="entry name" value="ARID_dom_sf"/>
</dbReference>
<dbReference type="InterPro" id="IPR008978">
    <property type="entry name" value="HSP20-like_chaperone"/>
</dbReference>
<dbReference type="PANTHER" id="PTHR15348:SF18">
    <property type="entry name" value="AT-RICH INTERACTIVE DOMAIN-CONTAINING PROTEIN 6"/>
    <property type="match status" value="1"/>
</dbReference>
<dbReference type="PANTHER" id="PTHR15348">
    <property type="entry name" value="AT-RICH INTERACTIVE DOMAIN-CONTAINING PROTEIN ARID DOMAIN- CONTAINING PROTEIN DEAD RINGER PROTEIN B-CELL REGULATOR OF IGH TRANSCRIPTION BRIGHT"/>
    <property type="match status" value="1"/>
</dbReference>
<dbReference type="Pfam" id="PF01388">
    <property type="entry name" value="ARID"/>
    <property type="match status" value="1"/>
</dbReference>
<dbReference type="SMART" id="SM01014">
    <property type="entry name" value="ARID"/>
    <property type="match status" value="1"/>
</dbReference>
<dbReference type="SMART" id="SM00501">
    <property type="entry name" value="BRIGHT"/>
    <property type="match status" value="1"/>
</dbReference>
<dbReference type="SUPFAM" id="SSF46774">
    <property type="entry name" value="ARID-like"/>
    <property type="match status" value="1"/>
</dbReference>
<dbReference type="SUPFAM" id="SSF49764">
    <property type="entry name" value="HSP20-like chaperones"/>
    <property type="match status" value="1"/>
</dbReference>
<dbReference type="PROSITE" id="PS51011">
    <property type="entry name" value="ARID"/>
    <property type="match status" value="1"/>
</dbReference>
<dbReference type="PROSITE" id="PS01031">
    <property type="entry name" value="SHSP"/>
    <property type="match status" value="1"/>
</dbReference>
<accession>C0SUW7</accession>
<accession>Q9SYP7</accession>
<keyword id="KW-0238">DNA-binding</keyword>
<keyword id="KW-0539">Nucleus</keyword>
<keyword id="KW-1185">Reference proteome</keyword>
<keyword id="KW-0804">Transcription</keyword>
<keyword id="KW-0805">Transcription regulation</keyword>
<gene>
    <name type="primary">ARID6</name>
    <name type="ordered locus">At1g20910</name>
    <name type="ORF">F9H16.11</name>
</gene>
<proteinExistence type="evidence at protein level"/>
<sequence>MVDTEMQEQDVTFGALVETKYLEEEPLEPENDHNPSEIPQPLLLGDGQANNGHGMNGGAVGVVDHSERKTRRVQMLSPKTEGENAKKRKTWLLDSEAQGTDEAGTPVEQVAFLREVEAFYKESFLEFKPPKFYGQPLNILKLWRAVVNLGGYEVVTTNKLWRQVGESFNPPKTCTTVSYTFRNFYEKALLEYEKCLRNNGELNLPGSTLILSSSVEKEPSSHQGSGSGRARRDSAARAMQGWHAQRLVGSGEVTAPAVKDKGLISTPKHKKLKSIGLQKHKQQTSMDHVVTNEADKQLAAEVVDVGPVADWVKINVKESKDSFEIFALVPGLLRKEVRIQSDPAGKVVITGQPEQLDNPWGITPFKKIVDLSARIDPLHTSAVMSMHGRLFIRVPFEQ</sequence>
<name>ARID6_ARATH</name>
<organism>
    <name type="scientific">Arabidopsis thaliana</name>
    <name type="common">Mouse-ear cress</name>
    <dbReference type="NCBI Taxonomy" id="3702"/>
    <lineage>
        <taxon>Eukaryota</taxon>
        <taxon>Viridiplantae</taxon>
        <taxon>Streptophyta</taxon>
        <taxon>Embryophyta</taxon>
        <taxon>Tracheophyta</taxon>
        <taxon>Spermatophyta</taxon>
        <taxon>Magnoliopsida</taxon>
        <taxon>eudicotyledons</taxon>
        <taxon>Gunneridae</taxon>
        <taxon>Pentapetalae</taxon>
        <taxon>rosids</taxon>
        <taxon>malvids</taxon>
        <taxon>Brassicales</taxon>
        <taxon>Brassicaceae</taxon>
        <taxon>Camelineae</taxon>
        <taxon>Arabidopsis</taxon>
    </lineage>
</organism>
<reference key="1">
    <citation type="journal article" date="2000" name="Nature">
        <title>Sequence and analysis of chromosome 1 of the plant Arabidopsis thaliana.</title>
        <authorList>
            <person name="Theologis A."/>
            <person name="Ecker J.R."/>
            <person name="Palm C.J."/>
            <person name="Federspiel N.A."/>
            <person name="Kaul S."/>
            <person name="White O."/>
            <person name="Alonso J."/>
            <person name="Altafi H."/>
            <person name="Araujo R."/>
            <person name="Bowman C.L."/>
            <person name="Brooks S.Y."/>
            <person name="Buehler E."/>
            <person name="Chan A."/>
            <person name="Chao Q."/>
            <person name="Chen H."/>
            <person name="Cheuk R.F."/>
            <person name="Chin C.W."/>
            <person name="Chung M.K."/>
            <person name="Conn L."/>
            <person name="Conway A.B."/>
            <person name="Conway A.R."/>
            <person name="Creasy T.H."/>
            <person name="Dewar K."/>
            <person name="Dunn P."/>
            <person name="Etgu P."/>
            <person name="Feldblyum T.V."/>
            <person name="Feng J.-D."/>
            <person name="Fong B."/>
            <person name="Fujii C.Y."/>
            <person name="Gill J.E."/>
            <person name="Goldsmith A.D."/>
            <person name="Haas B."/>
            <person name="Hansen N.F."/>
            <person name="Hughes B."/>
            <person name="Huizar L."/>
            <person name="Hunter J.L."/>
            <person name="Jenkins J."/>
            <person name="Johnson-Hopson C."/>
            <person name="Khan S."/>
            <person name="Khaykin E."/>
            <person name="Kim C.J."/>
            <person name="Koo H.L."/>
            <person name="Kremenetskaia I."/>
            <person name="Kurtz D.B."/>
            <person name="Kwan A."/>
            <person name="Lam B."/>
            <person name="Langin-Hooper S."/>
            <person name="Lee A."/>
            <person name="Lee J.M."/>
            <person name="Lenz C.A."/>
            <person name="Li J.H."/>
            <person name="Li Y.-P."/>
            <person name="Lin X."/>
            <person name="Liu S.X."/>
            <person name="Liu Z.A."/>
            <person name="Luros J.S."/>
            <person name="Maiti R."/>
            <person name="Marziali A."/>
            <person name="Militscher J."/>
            <person name="Miranda M."/>
            <person name="Nguyen M."/>
            <person name="Nierman W.C."/>
            <person name="Osborne B.I."/>
            <person name="Pai G."/>
            <person name="Peterson J."/>
            <person name="Pham P.K."/>
            <person name="Rizzo M."/>
            <person name="Rooney T."/>
            <person name="Rowley D."/>
            <person name="Sakano H."/>
            <person name="Salzberg S.L."/>
            <person name="Schwartz J.R."/>
            <person name="Shinn P."/>
            <person name="Southwick A.M."/>
            <person name="Sun H."/>
            <person name="Tallon L.J."/>
            <person name="Tambunga G."/>
            <person name="Toriumi M.J."/>
            <person name="Town C.D."/>
            <person name="Utterback T."/>
            <person name="Van Aken S."/>
            <person name="Vaysberg M."/>
            <person name="Vysotskaia V.S."/>
            <person name="Walker M."/>
            <person name="Wu D."/>
            <person name="Yu G."/>
            <person name="Fraser C.M."/>
            <person name="Venter J.C."/>
            <person name="Davis R.W."/>
        </authorList>
    </citation>
    <scope>NUCLEOTIDE SEQUENCE [LARGE SCALE GENOMIC DNA]</scope>
    <source>
        <strain>cv. Columbia</strain>
    </source>
</reference>
<reference key="2">
    <citation type="journal article" date="2017" name="Plant J.">
        <title>Araport11: a complete reannotation of the Arabidopsis thaliana reference genome.</title>
        <authorList>
            <person name="Cheng C.Y."/>
            <person name="Krishnakumar V."/>
            <person name="Chan A.P."/>
            <person name="Thibaud-Nissen F."/>
            <person name="Schobel S."/>
            <person name="Town C.D."/>
        </authorList>
    </citation>
    <scope>GENOME REANNOTATION</scope>
    <source>
        <strain>cv. Columbia</strain>
    </source>
</reference>
<reference key="3">
    <citation type="submission" date="2009-03" db="EMBL/GenBank/DDBJ databases">
        <title>ORF cloning and analysis of Arabidopsis transcription factor genes.</title>
        <authorList>
            <person name="Fujita M."/>
            <person name="Mizukado S."/>
            <person name="Seki M."/>
            <person name="Shinozaki K."/>
            <person name="Mitsuda N."/>
            <person name="Takiguchi Y."/>
            <person name="Takagi M."/>
        </authorList>
    </citation>
    <scope>NUCLEOTIDE SEQUENCE [LARGE SCALE MRNA]</scope>
</reference>
<feature type="chain" id="PRO_0000413214" description="AT-rich interactive domain-containing protein 6">
    <location>
        <begin position="1"/>
        <end position="398"/>
    </location>
</feature>
<feature type="domain" description="ARID" evidence="2">
    <location>
        <begin position="106"/>
        <end position="197"/>
    </location>
</feature>
<feature type="domain" description="sHSP" evidence="1">
    <location>
        <begin position="305"/>
        <end position="398"/>
    </location>
</feature>
<feature type="region of interest" description="Disordered" evidence="3">
    <location>
        <begin position="25"/>
        <end position="87"/>
    </location>
</feature>
<feature type="region of interest" description="Disordered" evidence="3">
    <location>
        <begin position="213"/>
        <end position="236"/>
    </location>
</feature>
<comment type="interaction">
    <interactant intactId="EBI-15192335">
        <id>C0SUW7</id>
    </interactant>
    <interactant intactId="EBI-1573499">
        <id>Q9LNW3</id>
        <label>AIP1</label>
    </interactant>
    <organismsDiffer>false</organismsDiffer>
    <experiments>3</experiments>
</comment>
<comment type="interaction">
    <interactant intactId="EBI-15192335">
        <id>C0SUW7</id>
    </interactant>
    <interactant intactId="EBI-15200250">
        <id>Q9LDD4</id>
        <label>ARID2</label>
    </interactant>
    <organismsDiffer>false</organismsDiffer>
    <experiments>3</experiments>
</comment>
<comment type="interaction">
    <interactant intactId="EBI-15192335">
        <id>C0SUW7</id>
    </interactant>
    <interactant intactId="EBI-15193099">
        <id>Q940Y3</id>
        <label>ARID3</label>
    </interactant>
    <organismsDiffer>false</organismsDiffer>
    <experiments>4</experiments>
</comment>
<comment type="interaction">
    <interactant intactId="EBI-15192335">
        <id>C0SUW7</id>
    </interactant>
    <interactant intactId="EBI-15192337">
        <id>Q9LG15</id>
        <label>At1g55950</label>
    </interactant>
    <organismsDiffer>false</organismsDiffer>
    <experiments>4</experiments>
</comment>
<comment type="interaction">
    <interactant intactId="EBI-15192335">
        <id>C0SUW7</id>
    </interactant>
    <interactant intactId="EBI-15202826">
        <id>Q8RWG0</id>
        <label>At2g36720</label>
    </interactant>
    <organismsDiffer>false</organismsDiffer>
    <experiments>4</experiments>
</comment>
<comment type="interaction">
    <interactant intactId="EBI-15192335">
        <id>C0SUW7</id>
    </interactant>
    <interactant intactId="EBI-630062">
        <id>Q6DBN1</id>
        <label>At4g08455</label>
    </interactant>
    <organismsDiffer>false</organismsDiffer>
    <experiments>3</experiments>
</comment>
<comment type="interaction">
    <interactant intactId="EBI-15192335">
        <id>C0SUW7</id>
    </interactant>
    <interactant intactId="EBI-25522944">
        <id>Q9ZT48</id>
        <label>ATE1</label>
    </interactant>
    <organismsDiffer>false</organismsDiffer>
    <experiments>3</experiments>
</comment>
<comment type="interaction">
    <interactant intactId="EBI-15192335">
        <id>C0SUW7</id>
    </interactant>
    <interactant intactId="EBI-632243">
        <id>P93830</id>
        <label>IAA17</label>
    </interactant>
    <organismsDiffer>false</organismsDiffer>
    <experiments>3</experiments>
</comment>
<comment type="interaction">
    <interactant intactId="EBI-15192335">
        <id>C0SUW7</id>
    </interactant>
    <interactant intactId="EBI-15193239">
        <id>Q8VZ17</id>
        <label>SUVH6</label>
    </interactant>
    <organismsDiffer>false</organismsDiffer>
    <experiments>3</experiments>
</comment>
<comment type="subcellular location">
    <subcellularLocation>
        <location evidence="2">Nucleus</location>
    </subcellularLocation>
</comment>
<comment type="similarity">
    <text evidence="1">Belongs to the small heat shock protein (HSP20) family.</text>
</comment>
<comment type="sequence caution" evidence="4">
    <conflict type="erroneous gene model prediction">
        <sequence resource="EMBL-CDS" id="AAD30601"/>
    </conflict>
</comment>